<keyword id="KW-0001">2Fe-2S</keyword>
<keyword id="KW-0963">Cytoplasm</keyword>
<keyword id="KW-0408">Iron</keyword>
<keyword id="KW-0411">Iron-sulfur</keyword>
<keyword id="KW-0479">Metal-binding</keyword>
<keyword id="KW-0663">Pyridoxal phosphate</keyword>
<keyword id="KW-0808">Transferase</keyword>
<gene>
    <name evidence="1" type="primary">iscS</name>
    <name type="ordered locus">BWG_2294</name>
</gene>
<name>ISCS_ECOBW</name>
<feature type="chain" id="PRO_1000205169" description="Cysteine desulfurase IscS">
    <location>
        <begin position="1"/>
        <end position="404"/>
    </location>
</feature>
<feature type="active site" description="Cysteine persulfide intermediate" evidence="1">
    <location>
        <position position="328"/>
    </location>
</feature>
<feature type="binding site" evidence="1">
    <location>
        <begin position="75"/>
        <end position="76"/>
    </location>
    <ligand>
        <name>pyridoxal 5'-phosphate</name>
        <dbReference type="ChEBI" id="CHEBI:597326"/>
    </ligand>
</feature>
<feature type="binding site" evidence="1">
    <location>
        <position position="155"/>
    </location>
    <ligand>
        <name>pyridoxal 5'-phosphate</name>
        <dbReference type="ChEBI" id="CHEBI:597326"/>
    </ligand>
</feature>
<feature type="binding site" evidence="1">
    <location>
        <position position="183"/>
    </location>
    <ligand>
        <name>pyridoxal 5'-phosphate</name>
        <dbReference type="ChEBI" id="CHEBI:597326"/>
    </ligand>
</feature>
<feature type="binding site" evidence="1">
    <location>
        <begin position="203"/>
        <end position="205"/>
    </location>
    <ligand>
        <name>pyridoxal 5'-phosphate</name>
        <dbReference type="ChEBI" id="CHEBI:597326"/>
    </ligand>
</feature>
<feature type="binding site" evidence="1">
    <location>
        <position position="243"/>
    </location>
    <ligand>
        <name>pyridoxal 5'-phosphate</name>
        <dbReference type="ChEBI" id="CHEBI:597326"/>
    </ligand>
</feature>
<feature type="binding site" description="via persulfide group" evidence="1">
    <location>
        <position position="328"/>
    </location>
    <ligand>
        <name>[2Fe-2S] cluster</name>
        <dbReference type="ChEBI" id="CHEBI:190135"/>
        <note>ligand shared with IscU</note>
    </ligand>
</feature>
<feature type="modified residue" description="N6-(pyridoxal phosphate)lysine" evidence="1">
    <location>
        <position position="206"/>
    </location>
</feature>
<proteinExistence type="inferred from homology"/>
<evidence type="ECO:0000255" key="1">
    <source>
        <dbReference type="HAMAP-Rule" id="MF_00331"/>
    </source>
</evidence>
<organism>
    <name type="scientific">Escherichia coli (strain K12 / MC4100 / BW2952)</name>
    <dbReference type="NCBI Taxonomy" id="595496"/>
    <lineage>
        <taxon>Bacteria</taxon>
        <taxon>Pseudomonadati</taxon>
        <taxon>Pseudomonadota</taxon>
        <taxon>Gammaproteobacteria</taxon>
        <taxon>Enterobacterales</taxon>
        <taxon>Enterobacteriaceae</taxon>
        <taxon>Escherichia</taxon>
    </lineage>
</organism>
<reference key="1">
    <citation type="journal article" date="2009" name="J. Bacteriol.">
        <title>Genomic sequencing reveals regulatory mutations and recombinational events in the widely used MC4100 lineage of Escherichia coli K-12.</title>
        <authorList>
            <person name="Ferenci T."/>
            <person name="Zhou Z."/>
            <person name="Betteridge T."/>
            <person name="Ren Y."/>
            <person name="Liu Y."/>
            <person name="Feng L."/>
            <person name="Reeves P.R."/>
            <person name="Wang L."/>
        </authorList>
    </citation>
    <scope>NUCLEOTIDE SEQUENCE [LARGE SCALE GENOMIC DNA]</scope>
    <source>
        <strain>K12 / MC4100 / BW2952</strain>
    </source>
</reference>
<accession>C4ZXA5</accession>
<sequence length="404" mass="45090">MKLPIYLDYSATTPVDPRVAEKMMQFMTMDGTFGNPASRSHRFGWQAEEAVDIARNQIADLVGADPREIVFTSGATESDNLAIKGAANFYQKKGKHIITSKTEHKAVLDTCRQLEREGFEVTYLAPQRNGIIDLKELEAAMRDDTILVSIMHVNNEIGVVQDIAAIGEMCRARGIIYHVDATQSVGKLPIDLSQLKVDLMSFSGHKIYGPKGIGALYVRRKPRVRIEAQMHGGGHERGMRSGTLPVHQIVGMGEAYRIAKEEMATEMERLRGLRNRLWNGIKDIEEVYLNGDLEHGAPNILNVSFNYVEGESLIMALKDLAVSSGSACTSASLEPSYVLRALGLNDELAHSSIRFSLGRFTTEEEIDYTIELVRKSIGRLRDLSPLWEMYKQGVDLNSIEWAHH</sequence>
<dbReference type="EC" id="2.8.1.7" evidence="1"/>
<dbReference type="EMBL" id="CP001396">
    <property type="protein sequence ID" value="ACR62691.1"/>
    <property type="molecule type" value="Genomic_DNA"/>
</dbReference>
<dbReference type="RefSeq" id="WP_001295373.1">
    <property type="nucleotide sequence ID" value="NC_012759.1"/>
</dbReference>
<dbReference type="SMR" id="C4ZXA5"/>
<dbReference type="GeneID" id="93774606"/>
<dbReference type="KEGG" id="ebw:BWG_2294"/>
<dbReference type="HOGENOM" id="CLU_003433_0_2_6"/>
<dbReference type="UniPathway" id="UPA00266"/>
<dbReference type="GO" id="GO:1990221">
    <property type="term" value="C:L-cysteine desulfurase complex"/>
    <property type="evidence" value="ECO:0007669"/>
    <property type="project" value="UniProtKB-ARBA"/>
</dbReference>
<dbReference type="GO" id="GO:0051537">
    <property type="term" value="F:2 iron, 2 sulfur cluster binding"/>
    <property type="evidence" value="ECO:0007669"/>
    <property type="project" value="UniProtKB-UniRule"/>
</dbReference>
<dbReference type="GO" id="GO:0031071">
    <property type="term" value="F:cysteine desulfurase activity"/>
    <property type="evidence" value="ECO:0007669"/>
    <property type="project" value="UniProtKB-UniRule"/>
</dbReference>
<dbReference type="GO" id="GO:0046872">
    <property type="term" value="F:metal ion binding"/>
    <property type="evidence" value="ECO:0007669"/>
    <property type="project" value="UniProtKB-KW"/>
</dbReference>
<dbReference type="GO" id="GO:0030170">
    <property type="term" value="F:pyridoxal phosphate binding"/>
    <property type="evidence" value="ECO:0007669"/>
    <property type="project" value="UniProtKB-UniRule"/>
</dbReference>
<dbReference type="GO" id="GO:0044571">
    <property type="term" value="P:[2Fe-2S] cluster assembly"/>
    <property type="evidence" value="ECO:0007669"/>
    <property type="project" value="UniProtKB-UniRule"/>
</dbReference>
<dbReference type="FunFam" id="3.40.640.10:FF:000003">
    <property type="entry name" value="Cysteine desulfurase IscS"/>
    <property type="match status" value="1"/>
</dbReference>
<dbReference type="FunFam" id="3.90.1150.10:FF:000002">
    <property type="entry name" value="Cysteine desulfurase IscS"/>
    <property type="match status" value="1"/>
</dbReference>
<dbReference type="Gene3D" id="3.90.1150.10">
    <property type="entry name" value="Aspartate Aminotransferase, domain 1"/>
    <property type="match status" value="1"/>
</dbReference>
<dbReference type="Gene3D" id="3.40.640.10">
    <property type="entry name" value="Type I PLP-dependent aspartate aminotransferase-like (Major domain)"/>
    <property type="match status" value="1"/>
</dbReference>
<dbReference type="HAMAP" id="MF_00331">
    <property type="entry name" value="Cys_desulf_IscS"/>
    <property type="match status" value="1"/>
</dbReference>
<dbReference type="InterPro" id="IPR000192">
    <property type="entry name" value="Aminotrans_V_dom"/>
</dbReference>
<dbReference type="InterPro" id="IPR020578">
    <property type="entry name" value="Aminotrans_V_PyrdxlP_BS"/>
</dbReference>
<dbReference type="InterPro" id="IPR010240">
    <property type="entry name" value="Cys_deSase_IscS"/>
</dbReference>
<dbReference type="InterPro" id="IPR016454">
    <property type="entry name" value="Cysteine_dSase"/>
</dbReference>
<dbReference type="InterPro" id="IPR015424">
    <property type="entry name" value="PyrdxlP-dep_Trfase"/>
</dbReference>
<dbReference type="InterPro" id="IPR015421">
    <property type="entry name" value="PyrdxlP-dep_Trfase_major"/>
</dbReference>
<dbReference type="InterPro" id="IPR015422">
    <property type="entry name" value="PyrdxlP-dep_Trfase_small"/>
</dbReference>
<dbReference type="NCBIfam" id="TIGR02006">
    <property type="entry name" value="IscS"/>
    <property type="match status" value="1"/>
</dbReference>
<dbReference type="NCBIfam" id="NF002806">
    <property type="entry name" value="PRK02948.1"/>
    <property type="match status" value="1"/>
</dbReference>
<dbReference type="NCBIfam" id="NF010611">
    <property type="entry name" value="PRK14012.1"/>
    <property type="match status" value="1"/>
</dbReference>
<dbReference type="PANTHER" id="PTHR11601:SF34">
    <property type="entry name" value="CYSTEINE DESULFURASE"/>
    <property type="match status" value="1"/>
</dbReference>
<dbReference type="PANTHER" id="PTHR11601">
    <property type="entry name" value="CYSTEINE DESULFURYLASE FAMILY MEMBER"/>
    <property type="match status" value="1"/>
</dbReference>
<dbReference type="Pfam" id="PF00266">
    <property type="entry name" value="Aminotran_5"/>
    <property type="match status" value="1"/>
</dbReference>
<dbReference type="PIRSF" id="PIRSF005572">
    <property type="entry name" value="NifS"/>
    <property type="match status" value="1"/>
</dbReference>
<dbReference type="SUPFAM" id="SSF53383">
    <property type="entry name" value="PLP-dependent transferases"/>
    <property type="match status" value="1"/>
</dbReference>
<dbReference type="PROSITE" id="PS00595">
    <property type="entry name" value="AA_TRANSFER_CLASS_5"/>
    <property type="match status" value="1"/>
</dbReference>
<comment type="function">
    <text evidence="1">Master enzyme that delivers sulfur to a number of partners involved in Fe-S cluster assembly, tRNA modification or cofactor biosynthesis. Catalyzes the removal of elemental sulfur and selenium atoms from cysteine and selenocysteine to produce alanine. Functions as a sulfur delivery protein for Fe-S cluster synthesis onto IscU, an Fe-S scaffold assembly protein, as well as other S acceptor proteins. Also functions as a selenium delivery protein in the pathway for the biosynthesis of selenophosphate.</text>
</comment>
<comment type="catalytic activity">
    <reaction evidence="1">
        <text>(sulfur carrier)-H + L-cysteine = (sulfur carrier)-SH + L-alanine</text>
        <dbReference type="Rhea" id="RHEA:43892"/>
        <dbReference type="Rhea" id="RHEA-COMP:14737"/>
        <dbReference type="Rhea" id="RHEA-COMP:14739"/>
        <dbReference type="ChEBI" id="CHEBI:29917"/>
        <dbReference type="ChEBI" id="CHEBI:35235"/>
        <dbReference type="ChEBI" id="CHEBI:57972"/>
        <dbReference type="ChEBI" id="CHEBI:64428"/>
        <dbReference type="EC" id="2.8.1.7"/>
    </reaction>
</comment>
<comment type="cofactor">
    <cofactor evidence="1">
        <name>pyridoxal 5'-phosphate</name>
        <dbReference type="ChEBI" id="CHEBI:597326"/>
    </cofactor>
</comment>
<comment type="pathway">
    <text evidence="1">Cofactor biosynthesis; iron-sulfur cluster biosynthesis.</text>
</comment>
<comment type="subunit">
    <text evidence="1">Homodimer. Forms a heterotetramer with IscU, interacts with other sulfur acceptors.</text>
</comment>
<comment type="subcellular location">
    <subcellularLocation>
        <location evidence="1">Cytoplasm</location>
    </subcellularLocation>
</comment>
<comment type="similarity">
    <text evidence="1">Belongs to the class-V pyridoxal-phosphate-dependent aminotransferase family. NifS/IscS subfamily.</text>
</comment>
<protein>
    <recommendedName>
        <fullName evidence="1">Cysteine desulfurase IscS</fullName>
        <ecNumber evidence="1">2.8.1.7</ecNumber>
    </recommendedName>
</protein>